<accession>Q9U644</accession>
<reference key="1">
    <citation type="journal article" date="2001" name="Mol. Biol. Evol.">
        <title>Mechanisms for evolving hypervariability: the case of conopeptides.</title>
        <authorList>
            <person name="Conticello S.G."/>
            <person name="Gilad Y."/>
            <person name="Avidan N."/>
            <person name="Ben-Asher E."/>
            <person name="Levy Z."/>
            <person name="Fainzilber M."/>
        </authorList>
    </citation>
    <scope>NUCLEOTIDE SEQUENCE [MRNA]</scope>
    <source>
        <tissue>Venom duct</tissue>
    </source>
</reference>
<sequence>MKLTCMMIVAVLFLTAWTLVMADDSNNGLANLFSKSRDEMEDPEASKLEKKDCQEKWDFCPAPFFGSRYCCFGLFCTLFFCA</sequence>
<proteinExistence type="evidence at transcript level"/>
<comment type="function">
    <text evidence="1">Omega-conotoxins act at presynaptic membranes, they bind and block voltage-gated calcium channels (Cav).</text>
</comment>
<comment type="subcellular location">
    <subcellularLocation>
        <location evidence="1">Secreted</location>
    </subcellularLocation>
</comment>
<comment type="tissue specificity">
    <text>Expressed by the venom duct.</text>
</comment>
<comment type="domain">
    <text evidence="1">The presence of a 'disulfide through disulfide knot' structurally defines this protein as a knottin.</text>
</comment>
<comment type="domain">
    <text>The cysteine framework is VI/VII (C-C-CC-C-C).</text>
</comment>
<comment type="similarity">
    <text evidence="3">Belongs to the conotoxin O1 superfamily.</text>
</comment>
<dbReference type="EMBL" id="AF193272">
    <property type="protein sequence ID" value="AAF07983.1"/>
    <property type="molecule type" value="mRNA"/>
</dbReference>
<dbReference type="SMR" id="Q9U644"/>
<dbReference type="ConoServer" id="1105">
    <property type="toxin name" value="TxMKLT1-031 precursor"/>
</dbReference>
<dbReference type="GO" id="GO:0005576">
    <property type="term" value="C:extracellular region"/>
    <property type="evidence" value="ECO:0007669"/>
    <property type="project" value="UniProtKB-SubCell"/>
</dbReference>
<dbReference type="GO" id="GO:0044231">
    <property type="term" value="C:host cell presynaptic membrane"/>
    <property type="evidence" value="ECO:0007669"/>
    <property type="project" value="UniProtKB-KW"/>
</dbReference>
<dbReference type="GO" id="GO:0005246">
    <property type="term" value="F:calcium channel regulator activity"/>
    <property type="evidence" value="ECO:0007669"/>
    <property type="project" value="UniProtKB-KW"/>
</dbReference>
<dbReference type="GO" id="GO:0008200">
    <property type="term" value="F:ion channel inhibitor activity"/>
    <property type="evidence" value="ECO:0007669"/>
    <property type="project" value="InterPro"/>
</dbReference>
<dbReference type="GO" id="GO:0090729">
    <property type="term" value="F:toxin activity"/>
    <property type="evidence" value="ECO:0007669"/>
    <property type="project" value="UniProtKB-KW"/>
</dbReference>
<dbReference type="InterPro" id="IPR004214">
    <property type="entry name" value="Conotoxin"/>
</dbReference>
<dbReference type="Pfam" id="PF02950">
    <property type="entry name" value="Conotoxin"/>
    <property type="match status" value="1"/>
</dbReference>
<dbReference type="SUPFAM" id="SSF57059">
    <property type="entry name" value="omega toxin-like"/>
    <property type="match status" value="1"/>
</dbReference>
<organism>
    <name type="scientific">Conus textile</name>
    <name type="common">Cloth-of-gold cone</name>
    <dbReference type="NCBI Taxonomy" id="6494"/>
    <lineage>
        <taxon>Eukaryota</taxon>
        <taxon>Metazoa</taxon>
        <taxon>Spiralia</taxon>
        <taxon>Lophotrochozoa</taxon>
        <taxon>Mollusca</taxon>
        <taxon>Gastropoda</taxon>
        <taxon>Caenogastropoda</taxon>
        <taxon>Neogastropoda</taxon>
        <taxon>Conoidea</taxon>
        <taxon>Conidae</taxon>
        <taxon>Conus</taxon>
        <taxon>Cylinder</taxon>
    </lineage>
</organism>
<name>O1631_CONTE</name>
<protein>
    <recommendedName>
        <fullName>Omega-conotoxin-like TxMKLT1-031</fullName>
    </recommendedName>
</protein>
<evidence type="ECO:0000250" key="1"/>
<evidence type="ECO:0000255" key="2"/>
<evidence type="ECO:0000305" key="3"/>
<keyword id="KW-0108">Calcium channel impairing toxin</keyword>
<keyword id="KW-0165">Cleavage on pair of basic residues</keyword>
<keyword id="KW-1015">Disulfide bond</keyword>
<keyword id="KW-0872">Ion channel impairing toxin</keyword>
<keyword id="KW-0960">Knottin</keyword>
<keyword id="KW-0528">Neurotoxin</keyword>
<keyword id="KW-0638">Presynaptic neurotoxin</keyword>
<keyword id="KW-0964">Secreted</keyword>
<keyword id="KW-0732">Signal</keyword>
<keyword id="KW-0800">Toxin</keyword>
<keyword id="KW-1218">Voltage-gated calcium channel impairing toxin</keyword>
<feature type="signal peptide" evidence="2">
    <location>
        <begin position="1"/>
        <end position="22"/>
    </location>
</feature>
<feature type="propeptide" id="PRO_0000404764" evidence="1">
    <location>
        <begin position="23"/>
        <end position="49"/>
    </location>
</feature>
<feature type="peptide" id="PRO_0000404765" description="Omega-conotoxin-like TxMKLT1-031">
    <location>
        <begin position="52"/>
        <end position="82"/>
    </location>
</feature>
<feature type="disulfide bond" evidence="1">
    <location>
        <begin position="53"/>
        <end position="71"/>
    </location>
</feature>
<feature type="disulfide bond" evidence="1">
    <location>
        <begin position="60"/>
        <end position="76"/>
    </location>
</feature>
<feature type="disulfide bond" evidence="1">
    <location>
        <begin position="70"/>
        <end position="81"/>
    </location>
</feature>